<feature type="chain" id="PRO_1000016420" description="Histidine--tRNA ligase">
    <location>
        <begin position="1"/>
        <end position="426"/>
    </location>
</feature>
<keyword id="KW-0030">Aminoacyl-tRNA synthetase</keyword>
<keyword id="KW-0067">ATP-binding</keyword>
<keyword id="KW-0963">Cytoplasm</keyword>
<keyword id="KW-0436">Ligase</keyword>
<keyword id="KW-0547">Nucleotide-binding</keyword>
<keyword id="KW-0648">Protein biosynthesis</keyword>
<keyword id="KW-1185">Reference proteome</keyword>
<reference key="1">
    <citation type="journal article" date="2005" name="Genome Res.">
        <title>Coping with cold: the genome of the versatile marine Antarctica bacterium Pseudoalteromonas haloplanktis TAC125.</title>
        <authorList>
            <person name="Medigue C."/>
            <person name="Krin E."/>
            <person name="Pascal G."/>
            <person name="Barbe V."/>
            <person name="Bernsel A."/>
            <person name="Bertin P.N."/>
            <person name="Cheung F."/>
            <person name="Cruveiller S."/>
            <person name="D'Amico S."/>
            <person name="Duilio A."/>
            <person name="Fang G."/>
            <person name="Feller G."/>
            <person name="Ho C."/>
            <person name="Mangenot S."/>
            <person name="Marino G."/>
            <person name="Nilsson J."/>
            <person name="Parrilli E."/>
            <person name="Rocha E.P.C."/>
            <person name="Rouy Z."/>
            <person name="Sekowska A."/>
            <person name="Tutino M.L."/>
            <person name="Vallenet D."/>
            <person name="von Heijne G."/>
            <person name="Danchin A."/>
        </authorList>
    </citation>
    <scope>NUCLEOTIDE SEQUENCE [LARGE SCALE GENOMIC DNA]</scope>
    <source>
        <strain>TAC 125</strain>
    </source>
</reference>
<organism>
    <name type="scientific">Pseudoalteromonas translucida (strain TAC 125)</name>
    <dbReference type="NCBI Taxonomy" id="326442"/>
    <lineage>
        <taxon>Bacteria</taxon>
        <taxon>Pseudomonadati</taxon>
        <taxon>Pseudomonadota</taxon>
        <taxon>Gammaproteobacteria</taxon>
        <taxon>Alteromonadales</taxon>
        <taxon>Pseudoalteromonadaceae</taxon>
        <taxon>Pseudoalteromonas</taxon>
    </lineage>
</organism>
<comment type="catalytic activity">
    <reaction evidence="1">
        <text>tRNA(His) + L-histidine + ATP = L-histidyl-tRNA(His) + AMP + diphosphate + H(+)</text>
        <dbReference type="Rhea" id="RHEA:17313"/>
        <dbReference type="Rhea" id="RHEA-COMP:9665"/>
        <dbReference type="Rhea" id="RHEA-COMP:9689"/>
        <dbReference type="ChEBI" id="CHEBI:15378"/>
        <dbReference type="ChEBI" id="CHEBI:30616"/>
        <dbReference type="ChEBI" id="CHEBI:33019"/>
        <dbReference type="ChEBI" id="CHEBI:57595"/>
        <dbReference type="ChEBI" id="CHEBI:78442"/>
        <dbReference type="ChEBI" id="CHEBI:78527"/>
        <dbReference type="ChEBI" id="CHEBI:456215"/>
        <dbReference type="EC" id="6.1.1.21"/>
    </reaction>
</comment>
<comment type="subunit">
    <text evidence="1">Homodimer.</text>
</comment>
<comment type="subcellular location">
    <subcellularLocation>
        <location evidence="1">Cytoplasm</location>
    </subcellularLocation>
</comment>
<comment type="similarity">
    <text evidence="1">Belongs to the class-II aminoacyl-tRNA synthetase family.</text>
</comment>
<name>SYH_PSET1</name>
<dbReference type="EC" id="6.1.1.21" evidence="1"/>
<dbReference type="EMBL" id="CR954247">
    <property type="protein sequence ID" value="CAI89184.1"/>
    <property type="molecule type" value="Genomic_DNA"/>
</dbReference>
<dbReference type="SMR" id="Q3ICZ6"/>
<dbReference type="STRING" id="326442.PSHAb0137"/>
<dbReference type="KEGG" id="pha:PSHAb0137"/>
<dbReference type="PATRIC" id="fig|326442.8.peg.3050"/>
<dbReference type="eggNOG" id="COG0124">
    <property type="taxonomic scope" value="Bacteria"/>
</dbReference>
<dbReference type="HOGENOM" id="CLU_025113_1_1_6"/>
<dbReference type="BioCyc" id="PHAL326442:PSHA_RS15525-MONOMER"/>
<dbReference type="Proteomes" id="UP000006843">
    <property type="component" value="Chromosome II"/>
</dbReference>
<dbReference type="GO" id="GO:0005737">
    <property type="term" value="C:cytoplasm"/>
    <property type="evidence" value="ECO:0007669"/>
    <property type="project" value="UniProtKB-SubCell"/>
</dbReference>
<dbReference type="GO" id="GO:0005524">
    <property type="term" value="F:ATP binding"/>
    <property type="evidence" value="ECO:0007669"/>
    <property type="project" value="UniProtKB-UniRule"/>
</dbReference>
<dbReference type="GO" id="GO:0004821">
    <property type="term" value="F:histidine-tRNA ligase activity"/>
    <property type="evidence" value="ECO:0007669"/>
    <property type="project" value="UniProtKB-UniRule"/>
</dbReference>
<dbReference type="GO" id="GO:0006427">
    <property type="term" value="P:histidyl-tRNA aminoacylation"/>
    <property type="evidence" value="ECO:0007669"/>
    <property type="project" value="UniProtKB-UniRule"/>
</dbReference>
<dbReference type="CDD" id="cd00773">
    <property type="entry name" value="HisRS-like_core"/>
    <property type="match status" value="1"/>
</dbReference>
<dbReference type="CDD" id="cd00859">
    <property type="entry name" value="HisRS_anticodon"/>
    <property type="match status" value="1"/>
</dbReference>
<dbReference type="FunFam" id="3.30.930.10:FF:000005">
    <property type="entry name" value="Histidine--tRNA ligase"/>
    <property type="match status" value="1"/>
</dbReference>
<dbReference type="Gene3D" id="3.40.50.800">
    <property type="entry name" value="Anticodon-binding domain"/>
    <property type="match status" value="1"/>
</dbReference>
<dbReference type="Gene3D" id="3.30.930.10">
    <property type="entry name" value="Bira Bifunctional Protein, Domain 2"/>
    <property type="match status" value="1"/>
</dbReference>
<dbReference type="HAMAP" id="MF_00127">
    <property type="entry name" value="His_tRNA_synth"/>
    <property type="match status" value="1"/>
</dbReference>
<dbReference type="InterPro" id="IPR006195">
    <property type="entry name" value="aa-tRNA-synth_II"/>
</dbReference>
<dbReference type="InterPro" id="IPR045864">
    <property type="entry name" value="aa-tRNA-synth_II/BPL/LPL"/>
</dbReference>
<dbReference type="InterPro" id="IPR004154">
    <property type="entry name" value="Anticodon-bd"/>
</dbReference>
<dbReference type="InterPro" id="IPR036621">
    <property type="entry name" value="Anticodon-bd_dom_sf"/>
</dbReference>
<dbReference type="InterPro" id="IPR015807">
    <property type="entry name" value="His-tRNA-ligase"/>
</dbReference>
<dbReference type="InterPro" id="IPR041715">
    <property type="entry name" value="HisRS-like_core"/>
</dbReference>
<dbReference type="InterPro" id="IPR004516">
    <property type="entry name" value="HisRS/HisZ"/>
</dbReference>
<dbReference type="InterPro" id="IPR033656">
    <property type="entry name" value="HisRS_anticodon"/>
</dbReference>
<dbReference type="NCBIfam" id="TIGR00442">
    <property type="entry name" value="hisS"/>
    <property type="match status" value="1"/>
</dbReference>
<dbReference type="PANTHER" id="PTHR43707:SF1">
    <property type="entry name" value="HISTIDINE--TRNA LIGASE, MITOCHONDRIAL-RELATED"/>
    <property type="match status" value="1"/>
</dbReference>
<dbReference type="PANTHER" id="PTHR43707">
    <property type="entry name" value="HISTIDYL-TRNA SYNTHETASE"/>
    <property type="match status" value="1"/>
</dbReference>
<dbReference type="Pfam" id="PF03129">
    <property type="entry name" value="HGTP_anticodon"/>
    <property type="match status" value="1"/>
</dbReference>
<dbReference type="Pfam" id="PF13393">
    <property type="entry name" value="tRNA-synt_His"/>
    <property type="match status" value="1"/>
</dbReference>
<dbReference type="PIRSF" id="PIRSF001549">
    <property type="entry name" value="His-tRNA_synth"/>
    <property type="match status" value="1"/>
</dbReference>
<dbReference type="SUPFAM" id="SSF52954">
    <property type="entry name" value="Class II aaRS ABD-related"/>
    <property type="match status" value="1"/>
</dbReference>
<dbReference type="SUPFAM" id="SSF55681">
    <property type="entry name" value="Class II aaRS and biotin synthetases"/>
    <property type="match status" value="1"/>
</dbReference>
<dbReference type="PROSITE" id="PS50862">
    <property type="entry name" value="AA_TRNA_LIGASE_II"/>
    <property type="match status" value="1"/>
</dbReference>
<accession>Q3ICZ6</accession>
<evidence type="ECO:0000255" key="1">
    <source>
        <dbReference type="HAMAP-Rule" id="MF_00127"/>
    </source>
</evidence>
<gene>
    <name evidence="1" type="primary">hisS</name>
    <name type="ordered locus">PSHAb0137</name>
</gene>
<protein>
    <recommendedName>
        <fullName evidence="1">Histidine--tRNA ligase</fullName>
        <ecNumber evidence="1">6.1.1.21</ecNumber>
    </recommendedName>
    <alternativeName>
        <fullName evidence="1">Histidyl-tRNA synthetase</fullName>
        <shortName evidence="1">HisRS</shortName>
    </alternativeName>
</protein>
<proteinExistence type="inferred from homology"/>
<sequence length="426" mass="47823">MAKQIQAVRGMNDCLPGDTQVWQKVENILRETVASFGYQEIRFPIVESTDLFKRSIGEVTDIVEKEMYTFADRNGDLLTLRPEGTAVCVRAGNENGLLYNQEQRLWYMGPMFRHERPQKGRYRQFHQFGLETFGIASADIDAEVILLTAQLWESFGISEHVRLELNSLGSNEARANYRDALVAYLEQHLDVLDEDSKRRMYSNPLRVLDSKNPDVQAILINAPKLSEHLDTESKEHFANLCERLDAAGVKYTINEKLVRGLDYYNRTVFEWITDSLGAQGTVCAGGRYDGLVEQLGGKATPAVGFAMGLERLVLLLQALECVGDIRRNADVYLASMGDKASIQAPIIAATLRRDVPNLRVMVHAGGGNFKKQLKRADKSDALVAVIIGEDELEQGVVTIKYLRERKEQVTLELEQAKALLAELINS</sequence>